<dbReference type="EC" id="5.4.99.27" evidence="1"/>
<dbReference type="EMBL" id="AE017340">
    <property type="protein sequence ID" value="AAV81591.1"/>
    <property type="molecule type" value="Genomic_DNA"/>
</dbReference>
<dbReference type="RefSeq" id="WP_011234002.1">
    <property type="nucleotide sequence ID" value="NC_006512.1"/>
</dbReference>
<dbReference type="SMR" id="Q5QUC5"/>
<dbReference type="STRING" id="283942.IL0750"/>
<dbReference type="GeneID" id="41335904"/>
<dbReference type="KEGG" id="ilo:IL0750"/>
<dbReference type="eggNOG" id="COG0585">
    <property type="taxonomic scope" value="Bacteria"/>
</dbReference>
<dbReference type="HOGENOM" id="CLU_005281_4_0_6"/>
<dbReference type="OrthoDB" id="1550679at2"/>
<dbReference type="Proteomes" id="UP000001171">
    <property type="component" value="Chromosome"/>
</dbReference>
<dbReference type="GO" id="GO:0005829">
    <property type="term" value="C:cytosol"/>
    <property type="evidence" value="ECO:0007669"/>
    <property type="project" value="TreeGrafter"/>
</dbReference>
<dbReference type="GO" id="GO:0003723">
    <property type="term" value="F:RNA binding"/>
    <property type="evidence" value="ECO:0007669"/>
    <property type="project" value="InterPro"/>
</dbReference>
<dbReference type="GO" id="GO:0160150">
    <property type="term" value="F:tRNA pseudouridine(13) synthase activity"/>
    <property type="evidence" value="ECO:0007669"/>
    <property type="project" value="UniProtKB-EC"/>
</dbReference>
<dbReference type="GO" id="GO:0031119">
    <property type="term" value="P:tRNA pseudouridine synthesis"/>
    <property type="evidence" value="ECO:0007669"/>
    <property type="project" value="UniProtKB-UniRule"/>
</dbReference>
<dbReference type="CDD" id="cd02575">
    <property type="entry name" value="PseudoU_synth_EcTruD"/>
    <property type="match status" value="1"/>
</dbReference>
<dbReference type="Gene3D" id="3.30.2350.20">
    <property type="entry name" value="TruD, catalytic domain"/>
    <property type="match status" value="1"/>
</dbReference>
<dbReference type="Gene3D" id="3.30.2340.10">
    <property type="entry name" value="TruD, insertion domain"/>
    <property type="match status" value="1"/>
</dbReference>
<dbReference type="HAMAP" id="MF_01082">
    <property type="entry name" value="TruD"/>
    <property type="match status" value="1"/>
</dbReference>
<dbReference type="InterPro" id="IPR020103">
    <property type="entry name" value="PsdUridine_synth_cat_dom_sf"/>
</dbReference>
<dbReference type="InterPro" id="IPR001656">
    <property type="entry name" value="PsdUridine_synth_TruD"/>
</dbReference>
<dbReference type="InterPro" id="IPR020119">
    <property type="entry name" value="PsdUridine_synth_TruD_CS"/>
</dbReference>
<dbReference type="InterPro" id="IPR011760">
    <property type="entry name" value="PsdUridine_synth_TruD_insert"/>
</dbReference>
<dbReference type="InterPro" id="IPR042214">
    <property type="entry name" value="TruD_catalytic"/>
</dbReference>
<dbReference type="InterPro" id="IPR043165">
    <property type="entry name" value="TruD_insert_sf"/>
</dbReference>
<dbReference type="InterPro" id="IPR050170">
    <property type="entry name" value="TruD_pseudoU_synthase"/>
</dbReference>
<dbReference type="PANTHER" id="PTHR47811">
    <property type="entry name" value="TRNA PSEUDOURIDINE SYNTHASE D"/>
    <property type="match status" value="1"/>
</dbReference>
<dbReference type="PANTHER" id="PTHR47811:SF1">
    <property type="entry name" value="TRNA PSEUDOURIDINE SYNTHASE D"/>
    <property type="match status" value="1"/>
</dbReference>
<dbReference type="Pfam" id="PF01142">
    <property type="entry name" value="TruD"/>
    <property type="match status" value="2"/>
</dbReference>
<dbReference type="SUPFAM" id="SSF55120">
    <property type="entry name" value="Pseudouridine synthase"/>
    <property type="match status" value="1"/>
</dbReference>
<dbReference type="PROSITE" id="PS50984">
    <property type="entry name" value="TRUD"/>
    <property type="match status" value="1"/>
</dbReference>
<dbReference type="PROSITE" id="PS01268">
    <property type="entry name" value="UPF0024"/>
    <property type="match status" value="1"/>
</dbReference>
<gene>
    <name evidence="1" type="primary">truD</name>
    <name type="ordered locus">IL0750</name>
</gene>
<feature type="chain" id="PRO_0000152504" description="tRNA pseudouridine synthase D">
    <location>
        <begin position="1"/>
        <end position="350"/>
    </location>
</feature>
<feature type="domain" description="TRUD" evidence="1">
    <location>
        <begin position="160"/>
        <end position="310"/>
    </location>
</feature>
<feature type="active site" description="Nucleophile" evidence="1">
    <location>
        <position position="85"/>
    </location>
</feature>
<evidence type="ECO:0000255" key="1">
    <source>
        <dbReference type="HAMAP-Rule" id="MF_01082"/>
    </source>
</evidence>
<accession>Q5QUC5</accession>
<organism>
    <name type="scientific">Idiomarina loihiensis (strain ATCC BAA-735 / DSM 15497 / L2-TR)</name>
    <dbReference type="NCBI Taxonomy" id="283942"/>
    <lineage>
        <taxon>Bacteria</taxon>
        <taxon>Pseudomonadati</taxon>
        <taxon>Pseudomonadota</taxon>
        <taxon>Gammaproteobacteria</taxon>
        <taxon>Alteromonadales</taxon>
        <taxon>Idiomarinaceae</taxon>
        <taxon>Idiomarina</taxon>
    </lineage>
</organism>
<reference key="1">
    <citation type="journal article" date="2004" name="Proc. Natl. Acad. Sci. U.S.A.">
        <title>Genome sequence of the deep-sea gamma-proteobacterium Idiomarina loihiensis reveals amino acid fermentation as a source of carbon and energy.</title>
        <authorList>
            <person name="Hou S."/>
            <person name="Saw J.H."/>
            <person name="Lee K.S."/>
            <person name="Freitas T.A."/>
            <person name="Belisle C."/>
            <person name="Kawarabayasi Y."/>
            <person name="Donachie S.P."/>
            <person name="Pikina A."/>
            <person name="Galperin M.Y."/>
            <person name="Koonin E.V."/>
            <person name="Makarova K.S."/>
            <person name="Omelchenko M.V."/>
            <person name="Sorokin A."/>
            <person name="Wolf Y.I."/>
            <person name="Li Q.X."/>
            <person name="Keum Y.S."/>
            <person name="Campbell S."/>
            <person name="Denery J."/>
            <person name="Aizawa S."/>
            <person name="Shibata S."/>
            <person name="Malahoff A."/>
            <person name="Alam M."/>
        </authorList>
    </citation>
    <scope>NUCLEOTIDE SEQUENCE [LARGE SCALE GENOMIC DNA]</scope>
    <source>
        <strain>ATCC BAA-735 / DSM 15497 / L2-TR</strain>
    </source>
</reference>
<name>TRUD_IDILO</name>
<comment type="function">
    <text evidence="1">Responsible for synthesis of pseudouridine from uracil-13 in transfer RNAs.</text>
</comment>
<comment type="catalytic activity">
    <reaction evidence="1">
        <text>uridine(13) in tRNA = pseudouridine(13) in tRNA</text>
        <dbReference type="Rhea" id="RHEA:42540"/>
        <dbReference type="Rhea" id="RHEA-COMP:10105"/>
        <dbReference type="Rhea" id="RHEA-COMP:10106"/>
        <dbReference type="ChEBI" id="CHEBI:65314"/>
        <dbReference type="ChEBI" id="CHEBI:65315"/>
        <dbReference type="EC" id="5.4.99.27"/>
    </reaction>
</comment>
<comment type="similarity">
    <text evidence="1">Belongs to the pseudouridine synthase TruD family.</text>
</comment>
<sequence>MLAPSQVSLADLPRLHKGDRPQAEFKQTPEDFQVIEQLDVIDDGEGEHQWLWVRKTGANTNFCAEKIARFAGVSERNVSYSGLKDRQAVTWQWFSIQLPGKETLNWNELNDEEMSVERIIRRTKKLKTGFHRANRFVIRLANVSSREALENLWQGVSEQGVINYFGEQRFGRSGDNVAQAERWLMASRPPRISRSKRSLYLSALRSYLFNEIVAERIRQFGIEGTLTGDCVMLEGSQSVFTVEQWDDELKQRLANNNIYLTAPLAGSTNKPLVKGEADAFEQSLLQPFDSWLQALRKLRVEAARRTILLRVENPEISWQGKDAELRFTLPSGAYATTVLNEIVDLSGESR</sequence>
<proteinExistence type="inferred from homology"/>
<protein>
    <recommendedName>
        <fullName evidence="1">tRNA pseudouridine synthase D</fullName>
        <ecNumber evidence="1">5.4.99.27</ecNumber>
    </recommendedName>
    <alternativeName>
        <fullName evidence="1">tRNA pseudouridine(13) synthase</fullName>
    </alternativeName>
    <alternativeName>
        <fullName evidence="1">tRNA pseudouridylate synthase D</fullName>
    </alternativeName>
    <alternativeName>
        <fullName evidence="1">tRNA-uridine isomerase D</fullName>
    </alternativeName>
</protein>
<keyword id="KW-0413">Isomerase</keyword>
<keyword id="KW-1185">Reference proteome</keyword>
<keyword id="KW-0819">tRNA processing</keyword>